<keyword id="KW-0028">Amino-acid biosynthesis</keyword>
<keyword id="KW-0057">Aromatic amino acid biosynthesis</keyword>
<keyword id="KW-0520">NAD</keyword>
<keyword id="KW-0560">Oxidoreductase</keyword>
<keyword id="KW-1185">Reference proteome</keyword>
<gene>
    <name evidence="1" type="primary">aroB'</name>
    <name type="ordered locus">MTH_580</name>
</gene>
<sequence>MKFAWLLAPDTYWDEKKTFITAALESGIDHIVDTADSGRIKKLGNLTLISPDEDADIVLVGRDGEGDGTLELPETLEYSRDIEMASELSESGRQVAAYVEIRSKAHEELARRLGRVVDYLILVGEDWKIIPLENIIADLQEEDVKLIAAVADVDEARVALETLEHGTDGVLIEPADISQIKDIAALLENIESETYELKPATITRIEPIGSGDRVCVDTCSIMGIGEGMLVGSYSQGLFLVHSESLESEYVASRPFRVNAGPVQAYVMVPGGRTRYLSELETGDEVIIVDRDGRSRSAIVGRVKIEKRPLMLVEAEYEGMKVRTLLQNAETIRLVNDKGEPVSVSELGEGDRVLVYFDESARHFGMAIKETIIEK</sequence>
<comment type="function">
    <text evidence="1">Catalyzes the oxidative deamination and cyclization of 2-amino-3,7-dideoxy-D-threo-hept-6-ulosonic acid (ADH) to yield 3-dehydroquinate (DHQ), which is fed into the canonical shikimic pathway of aromatic amino acid biosynthesis.</text>
</comment>
<comment type="catalytic activity">
    <reaction evidence="1">
        <text>2-amino-2,3,7-trideoxy-D-lyxo-hept-6-ulosonate + NAD(+) + H2O = 3-dehydroquinate + NH4(+) + NADH + H(+)</text>
        <dbReference type="Rhea" id="RHEA:25956"/>
        <dbReference type="ChEBI" id="CHEBI:15377"/>
        <dbReference type="ChEBI" id="CHEBI:15378"/>
        <dbReference type="ChEBI" id="CHEBI:28938"/>
        <dbReference type="ChEBI" id="CHEBI:32364"/>
        <dbReference type="ChEBI" id="CHEBI:57540"/>
        <dbReference type="ChEBI" id="CHEBI:57945"/>
        <dbReference type="ChEBI" id="CHEBI:58859"/>
        <dbReference type="EC" id="1.4.1.24"/>
    </reaction>
</comment>
<comment type="similarity">
    <text evidence="1">Belongs to the archaeal-type DHQ synthase family.</text>
</comment>
<comment type="sequence caution" evidence="2">
    <conflict type="erroneous initiation">
        <sequence resource="EMBL-CDS" id="AAB85086"/>
    </conflict>
</comment>
<reference key="1">
    <citation type="journal article" date="1997" name="J. Bacteriol.">
        <title>Complete genome sequence of Methanobacterium thermoautotrophicum deltaH: functional analysis and comparative genomics.</title>
        <authorList>
            <person name="Smith D.R."/>
            <person name="Doucette-Stamm L.A."/>
            <person name="Deloughery C."/>
            <person name="Lee H.-M."/>
            <person name="Dubois J."/>
            <person name="Aldredge T."/>
            <person name="Bashirzadeh R."/>
            <person name="Blakely D."/>
            <person name="Cook R."/>
            <person name="Gilbert K."/>
            <person name="Harrison D."/>
            <person name="Hoang L."/>
            <person name="Keagle P."/>
            <person name="Lumm W."/>
            <person name="Pothier B."/>
            <person name="Qiu D."/>
            <person name="Spadafora R."/>
            <person name="Vicare R."/>
            <person name="Wang Y."/>
            <person name="Wierzbowski J."/>
            <person name="Gibson R."/>
            <person name="Jiwani N."/>
            <person name="Caruso A."/>
            <person name="Bush D."/>
            <person name="Safer H."/>
            <person name="Patwell D."/>
            <person name="Prabhakar S."/>
            <person name="McDougall S."/>
            <person name="Shimer G."/>
            <person name="Goyal A."/>
            <person name="Pietrovski S."/>
            <person name="Church G.M."/>
            <person name="Daniels C.J."/>
            <person name="Mao J.-I."/>
            <person name="Rice P."/>
            <person name="Noelling J."/>
            <person name="Reeve J.N."/>
        </authorList>
    </citation>
    <scope>NUCLEOTIDE SEQUENCE [LARGE SCALE GENOMIC DNA]</scope>
    <source>
        <strain>ATCC 29096 / DSM 1053 / JCM 10044 / NBRC 100330 / Delta H</strain>
    </source>
</reference>
<name>DHQS_METTH</name>
<protein>
    <recommendedName>
        <fullName evidence="1">3-dehydroquinate synthase</fullName>
        <shortName evidence="1">DHQ synthase</shortName>
        <ecNumber evidence="1">1.4.1.24</ecNumber>
    </recommendedName>
    <alternativeName>
        <fullName evidence="1">3-dehydroquinate synthase II</fullName>
    </alternativeName>
</protein>
<accession>O26680</accession>
<dbReference type="EC" id="1.4.1.24" evidence="1"/>
<dbReference type="EMBL" id="AE000666">
    <property type="protein sequence ID" value="AAB85086.1"/>
    <property type="status" value="ALT_INIT"/>
    <property type="molecule type" value="Genomic_DNA"/>
</dbReference>
<dbReference type="PIR" id="H69176">
    <property type="entry name" value="H69176"/>
</dbReference>
<dbReference type="RefSeq" id="WP_048060849.1">
    <property type="nucleotide sequence ID" value="NC_000916.1"/>
</dbReference>
<dbReference type="FunCoup" id="O26680">
    <property type="interactions" value="7"/>
</dbReference>
<dbReference type="STRING" id="187420.MTH_580"/>
<dbReference type="PaxDb" id="187420-MTH_580"/>
<dbReference type="EnsemblBacteria" id="AAB85086">
    <property type="protein sequence ID" value="AAB85086"/>
    <property type="gene ID" value="MTH_580"/>
</dbReference>
<dbReference type="KEGG" id="mth:MTH_580"/>
<dbReference type="PATRIC" id="fig|187420.15.peg.559"/>
<dbReference type="HOGENOM" id="CLU_056379_0_0_2"/>
<dbReference type="InParanoid" id="O26680"/>
<dbReference type="Proteomes" id="UP000005223">
    <property type="component" value="Chromosome"/>
</dbReference>
<dbReference type="GO" id="GO:0003856">
    <property type="term" value="F:3-dehydroquinate synthase activity"/>
    <property type="evidence" value="ECO:0007669"/>
    <property type="project" value="InterPro"/>
</dbReference>
<dbReference type="GO" id="GO:0102042">
    <property type="term" value="F:dehydroquinate synthase activity"/>
    <property type="evidence" value="ECO:0007669"/>
    <property type="project" value="UniProtKB-EC"/>
</dbReference>
<dbReference type="GO" id="GO:0051287">
    <property type="term" value="F:NAD binding"/>
    <property type="evidence" value="ECO:0007669"/>
    <property type="project" value="UniProtKB-UniRule"/>
</dbReference>
<dbReference type="GO" id="GO:0008652">
    <property type="term" value="P:amino acid biosynthetic process"/>
    <property type="evidence" value="ECO:0007669"/>
    <property type="project" value="UniProtKB-KW"/>
</dbReference>
<dbReference type="GO" id="GO:0009073">
    <property type="term" value="P:aromatic amino acid family biosynthetic process"/>
    <property type="evidence" value="ECO:0007669"/>
    <property type="project" value="UniProtKB-UniRule"/>
</dbReference>
<dbReference type="HAMAP" id="MF_01244">
    <property type="entry name" value="Arch_DHQ_synthase"/>
    <property type="match status" value="1"/>
</dbReference>
<dbReference type="InterPro" id="IPR002812">
    <property type="entry name" value="DHQ_synth"/>
</dbReference>
<dbReference type="NCBIfam" id="NF002626">
    <property type="entry name" value="PRK02290.1-4"/>
    <property type="match status" value="1"/>
</dbReference>
<dbReference type="PANTHER" id="PTHR33563">
    <property type="match status" value="1"/>
</dbReference>
<dbReference type="PANTHER" id="PTHR33563:SF1">
    <property type="entry name" value="3-DEHYDROQUINATE SYNTHASE"/>
    <property type="match status" value="1"/>
</dbReference>
<dbReference type="Pfam" id="PF01959">
    <property type="entry name" value="DHQS"/>
    <property type="match status" value="1"/>
</dbReference>
<dbReference type="PIRSF" id="PIRSF006655">
    <property type="entry name" value="DHQ_synth"/>
    <property type="match status" value="1"/>
</dbReference>
<feature type="chain" id="PRO_0000058772" description="3-dehydroquinate synthase">
    <location>
        <begin position="1"/>
        <end position="374"/>
    </location>
</feature>
<organism>
    <name type="scientific">Methanothermobacter thermautotrophicus (strain ATCC 29096 / DSM 1053 / JCM 10044 / NBRC 100330 / Delta H)</name>
    <name type="common">Methanobacterium thermoautotrophicum</name>
    <dbReference type="NCBI Taxonomy" id="187420"/>
    <lineage>
        <taxon>Archaea</taxon>
        <taxon>Methanobacteriati</taxon>
        <taxon>Methanobacteriota</taxon>
        <taxon>Methanomada group</taxon>
        <taxon>Methanobacteria</taxon>
        <taxon>Methanobacteriales</taxon>
        <taxon>Methanobacteriaceae</taxon>
        <taxon>Methanothermobacter</taxon>
    </lineage>
</organism>
<evidence type="ECO:0000255" key="1">
    <source>
        <dbReference type="HAMAP-Rule" id="MF_01244"/>
    </source>
</evidence>
<evidence type="ECO:0000305" key="2"/>
<proteinExistence type="inferred from homology"/>